<comment type="similarity">
    <text evidence="1">Belongs to the UPF0435 family.</text>
</comment>
<reference key="1">
    <citation type="journal article" date="2001" name="Lancet">
        <title>Whole genome sequencing of meticillin-resistant Staphylococcus aureus.</title>
        <authorList>
            <person name="Kuroda M."/>
            <person name="Ohta T."/>
            <person name="Uchiyama I."/>
            <person name="Baba T."/>
            <person name="Yuzawa H."/>
            <person name="Kobayashi I."/>
            <person name="Cui L."/>
            <person name="Oguchi A."/>
            <person name="Aoki K."/>
            <person name="Nagai Y."/>
            <person name="Lian J.-Q."/>
            <person name="Ito T."/>
            <person name="Kanamori M."/>
            <person name="Matsumaru H."/>
            <person name="Maruyama A."/>
            <person name="Murakami H."/>
            <person name="Hosoyama A."/>
            <person name="Mizutani-Ui Y."/>
            <person name="Takahashi N.K."/>
            <person name="Sawano T."/>
            <person name="Inoue R."/>
            <person name="Kaito C."/>
            <person name="Sekimizu K."/>
            <person name="Hirakawa H."/>
            <person name="Kuhara S."/>
            <person name="Goto S."/>
            <person name="Yabuzaki J."/>
            <person name="Kanehisa M."/>
            <person name="Yamashita A."/>
            <person name="Oshima K."/>
            <person name="Furuya K."/>
            <person name="Yoshino C."/>
            <person name="Shiba T."/>
            <person name="Hattori M."/>
            <person name="Ogasawara N."/>
            <person name="Hayashi H."/>
            <person name="Hiramatsu K."/>
        </authorList>
    </citation>
    <scope>NUCLEOTIDE SEQUENCE [LARGE SCALE GENOMIC DNA]</scope>
    <source>
        <strain>Mu50 / ATCC 700699</strain>
    </source>
</reference>
<gene>
    <name type="ordered locus">SAV1880</name>
</gene>
<proteinExistence type="inferred from homology"/>
<organism>
    <name type="scientific">Staphylococcus aureus (strain Mu50 / ATCC 700699)</name>
    <dbReference type="NCBI Taxonomy" id="158878"/>
    <lineage>
        <taxon>Bacteria</taxon>
        <taxon>Bacillati</taxon>
        <taxon>Bacillota</taxon>
        <taxon>Bacilli</taxon>
        <taxon>Bacillales</taxon>
        <taxon>Staphylococcaceae</taxon>
        <taxon>Staphylococcus</taxon>
    </lineage>
</organism>
<accession>Q99T01</accession>
<evidence type="ECO:0000255" key="1">
    <source>
        <dbReference type="HAMAP-Rule" id="MF_00829"/>
    </source>
</evidence>
<feature type="chain" id="PRO_0000291419" description="UPF0435 protein SAV1880">
    <location>
        <begin position="1"/>
        <end position="68"/>
    </location>
</feature>
<sequence>MAMTNEEKVLAIREKLNIVNQGLLDPEKYKNANEEELTDIYDFVQSRERLSPSEVTAIADALGQLRHD</sequence>
<protein>
    <recommendedName>
        <fullName evidence="1">UPF0435 protein SAV1880</fullName>
    </recommendedName>
</protein>
<dbReference type="EMBL" id="BA000017">
    <property type="protein sequence ID" value="BAB58042.1"/>
    <property type="molecule type" value="Genomic_DNA"/>
</dbReference>
<dbReference type="SMR" id="Q99T01"/>
<dbReference type="KEGG" id="sav:SAV1880"/>
<dbReference type="HOGENOM" id="CLU_199533_0_0_9"/>
<dbReference type="Proteomes" id="UP000002481">
    <property type="component" value="Chromosome"/>
</dbReference>
<dbReference type="HAMAP" id="MF_00829">
    <property type="entry name" value="UPF0435"/>
    <property type="match status" value="1"/>
</dbReference>
<dbReference type="InterPro" id="IPR009507">
    <property type="entry name" value="UPF0435"/>
</dbReference>
<dbReference type="Pfam" id="PF06569">
    <property type="entry name" value="DUF1128"/>
    <property type="match status" value="1"/>
</dbReference>
<name>Y1880_STAAM</name>